<protein>
    <recommendedName>
        <fullName evidence="1">UPF0434 protein Bphy_0537</fullName>
    </recommendedName>
</protein>
<sequence length="67" mass="7239">MDARLLEILVCPICKGPLSYDRAAQELICNADKLAYPIRDGIPVMLVDEARQTVEGTPVDLNPGSVA</sequence>
<evidence type="ECO:0000255" key="1">
    <source>
        <dbReference type="HAMAP-Rule" id="MF_01187"/>
    </source>
</evidence>
<keyword id="KW-1185">Reference proteome</keyword>
<dbReference type="EMBL" id="CP001043">
    <property type="protein sequence ID" value="ACC69729.1"/>
    <property type="molecule type" value="Genomic_DNA"/>
</dbReference>
<dbReference type="RefSeq" id="WP_007180583.1">
    <property type="nucleotide sequence ID" value="NZ_CADFGH010000001.1"/>
</dbReference>
<dbReference type="SMR" id="B2JDV3"/>
<dbReference type="STRING" id="391038.Bphy_0537"/>
<dbReference type="KEGG" id="bph:Bphy_0537"/>
<dbReference type="eggNOG" id="COG2835">
    <property type="taxonomic scope" value="Bacteria"/>
</dbReference>
<dbReference type="HOGENOM" id="CLU_155659_3_0_4"/>
<dbReference type="OrthoDB" id="9812205at2"/>
<dbReference type="Proteomes" id="UP000001192">
    <property type="component" value="Chromosome 1"/>
</dbReference>
<dbReference type="GO" id="GO:0005829">
    <property type="term" value="C:cytosol"/>
    <property type="evidence" value="ECO:0007669"/>
    <property type="project" value="TreeGrafter"/>
</dbReference>
<dbReference type="FunFam" id="2.20.25.10:FF:000002">
    <property type="entry name" value="UPF0434 protein YcaR"/>
    <property type="match status" value="1"/>
</dbReference>
<dbReference type="Gene3D" id="2.20.25.10">
    <property type="match status" value="1"/>
</dbReference>
<dbReference type="HAMAP" id="MF_01187">
    <property type="entry name" value="UPF0434"/>
    <property type="match status" value="1"/>
</dbReference>
<dbReference type="InterPro" id="IPR005651">
    <property type="entry name" value="Trm112-like"/>
</dbReference>
<dbReference type="PANTHER" id="PTHR33505:SF4">
    <property type="entry name" value="PROTEIN PREY, MITOCHONDRIAL"/>
    <property type="match status" value="1"/>
</dbReference>
<dbReference type="PANTHER" id="PTHR33505">
    <property type="entry name" value="ZGC:162634"/>
    <property type="match status" value="1"/>
</dbReference>
<dbReference type="Pfam" id="PF03966">
    <property type="entry name" value="Trm112p"/>
    <property type="match status" value="1"/>
</dbReference>
<dbReference type="SUPFAM" id="SSF158997">
    <property type="entry name" value="Trm112p-like"/>
    <property type="match status" value="1"/>
</dbReference>
<gene>
    <name type="ordered locus">Bphy_0537</name>
</gene>
<organism>
    <name type="scientific">Paraburkholderia phymatum (strain DSM 17167 / CIP 108236 / LMG 21445 / STM815)</name>
    <name type="common">Burkholderia phymatum</name>
    <dbReference type="NCBI Taxonomy" id="391038"/>
    <lineage>
        <taxon>Bacteria</taxon>
        <taxon>Pseudomonadati</taxon>
        <taxon>Pseudomonadota</taxon>
        <taxon>Betaproteobacteria</taxon>
        <taxon>Burkholderiales</taxon>
        <taxon>Burkholderiaceae</taxon>
        <taxon>Paraburkholderia</taxon>
    </lineage>
</organism>
<proteinExistence type="inferred from homology"/>
<name>Y537_PARP8</name>
<reference key="1">
    <citation type="journal article" date="2014" name="Stand. Genomic Sci.">
        <title>Complete genome sequence of Burkholderia phymatum STM815(T), a broad host range and efficient nitrogen-fixing symbiont of Mimosa species.</title>
        <authorList>
            <person name="Moulin L."/>
            <person name="Klonowska A."/>
            <person name="Caroline B."/>
            <person name="Booth K."/>
            <person name="Vriezen J.A."/>
            <person name="Melkonian R."/>
            <person name="James E.K."/>
            <person name="Young J.P."/>
            <person name="Bena G."/>
            <person name="Hauser L."/>
            <person name="Land M."/>
            <person name="Kyrpides N."/>
            <person name="Bruce D."/>
            <person name="Chain P."/>
            <person name="Copeland A."/>
            <person name="Pitluck S."/>
            <person name="Woyke T."/>
            <person name="Lizotte-Waniewski M."/>
            <person name="Bristow J."/>
            <person name="Riley M."/>
        </authorList>
    </citation>
    <scope>NUCLEOTIDE SEQUENCE [LARGE SCALE GENOMIC DNA]</scope>
    <source>
        <strain>DSM 17167 / CIP 108236 / LMG 21445 / STM815</strain>
    </source>
</reference>
<comment type="similarity">
    <text evidence="1">Belongs to the UPF0434 family.</text>
</comment>
<accession>B2JDV3</accession>
<feature type="chain" id="PRO_1000138295" description="UPF0434 protein Bphy_0537">
    <location>
        <begin position="1"/>
        <end position="67"/>
    </location>
</feature>